<proteinExistence type="inferred from homology"/>
<keyword id="KW-0150">Chloroplast</keyword>
<keyword id="KW-0934">Plastid</keyword>
<keyword id="KW-0687">Ribonucleoprotein</keyword>
<keyword id="KW-0689">Ribosomal protein</keyword>
<accession>Q06FP7</accession>
<gene>
    <name type="primary">rps15-A</name>
</gene>
<gene>
    <name type="primary">rps15-B</name>
</gene>
<reference key="1">
    <citation type="journal article" date="2006" name="Mol. Biol. Evol.">
        <title>The complete chloroplast genome sequence of Pelargonium x hortorum: organization and evolution of the largest and most highly rearranged chloroplast genome of land plants.</title>
        <authorList>
            <person name="Chumley T.W."/>
            <person name="Palmer J.D."/>
            <person name="Mower J.P."/>
            <person name="Fourcade H.M."/>
            <person name="Calie P.J."/>
            <person name="Boore J.L."/>
            <person name="Jansen R.K."/>
        </authorList>
    </citation>
    <scope>NUCLEOTIDE SEQUENCE [LARGE SCALE GENOMIC DNA]</scope>
    <source>
        <strain>cv. Ringo White</strain>
    </source>
</reference>
<geneLocation type="chloroplast"/>
<comment type="subunit">
    <text evidence="1">Part of the 30S ribosomal subunit.</text>
</comment>
<comment type="subcellular location">
    <subcellularLocation>
        <location>Plastid</location>
        <location>Chloroplast</location>
    </subcellularLocation>
</comment>
<comment type="similarity">
    <text evidence="2">Belongs to the universal ribosomal protein uS15 family.</text>
</comment>
<dbReference type="EMBL" id="DQ897681">
    <property type="protein sequence ID" value="ABI17325.1"/>
    <property type="molecule type" value="Genomic_DNA"/>
</dbReference>
<dbReference type="EMBL" id="DQ897681">
    <property type="protein sequence ID" value="ABI17314.1"/>
    <property type="molecule type" value="Genomic_DNA"/>
</dbReference>
<dbReference type="SMR" id="Q06FP7"/>
<dbReference type="GO" id="GO:0009507">
    <property type="term" value="C:chloroplast"/>
    <property type="evidence" value="ECO:0007669"/>
    <property type="project" value="UniProtKB-SubCell"/>
</dbReference>
<dbReference type="GO" id="GO:1990904">
    <property type="term" value="C:ribonucleoprotein complex"/>
    <property type="evidence" value="ECO:0007669"/>
    <property type="project" value="UniProtKB-KW"/>
</dbReference>
<dbReference type="GO" id="GO:0005840">
    <property type="term" value="C:ribosome"/>
    <property type="evidence" value="ECO:0007669"/>
    <property type="project" value="UniProtKB-KW"/>
</dbReference>
<dbReference type="GO" id="GO:0003735">
    <property type="term" value="F:structural constituent of ribosome"/>
    <property type="evidence" value="ECO:0007669"/>
    <property type="project" value="InterPro"/>
</dbReference>
<dbReference type="GO" id="GO:0006412">
    <property type="term" value="P:translation"/>
    <property type="evidence" value="ECO:0007669"/>
    <property type="project" value="UniProtKB-UniRule"/>
</dbReference>
<dbReference type="CDD" id="cd00353">
    <property type="entry name" value="Ribosomal_S15p_S13e"/>
    <property type="match status" value="1"/>
</dbReference>
<dbReference type="Gene3D" id="1.10.287.10">
    <property type="entry name" value="S15/NS1, RNA-binding"/>
    <property type="match status" value="1"/>
</dbReference>
<dbReference type="HAMAP" id="MF_01343_B">
    <property type="entry name" value="Ribosomal_uS15_B"/>
    <property type="match status" value="1"/>
</dbReference>
<dbReference type="InterPro" id="IPR000589">
    <property type="entry name" value="Ribosomal_uS15"/>
</dbReference>
<dbReference type="InterPro" id="IPR005290">
    <property type="entry name" value="Ribosomal_uS15_bac-type"/>
</dbReference>
<dbReference type="InterPro" id="IPR009068">
    <property type="entry name" value="uS15_NS1_RNA-bd_sf"/>
</dbReference>
<dbReference type="NCBIfam" id="TIGR00952">
    <property type="entry name" value="S15_bact"/>
    <property type="match status" value="1"/>
</dbReference>
<dbReference type="PANTHER" id="PTHR23321">
    <property type="entry name" value="RIBOSOMAL PROTEIN S15, BACTERIAL AND ORGANELLAR"/>
    <property type="match status" value="1"/>
</dbReference>
<dbReference type="PANTHER" id="PTHR23321:SF26">
    <property type="entry name" value="SMALL RIBOSOMAL SUBUNIT PROTEIN US15M"/>
    <property type="match status" value="1"/>
</dbReference>
<dbReference type="Pfam" id="PF00312">
    <property type="entry name" value="Ribosomal_S15"/>
    <property type="match status" value="1"/>
</dbReference>
<dbReference type="SMART" id="SM01387">
    <property type="entry name" value="Ribosomal_S15"/>
    <property type="match status" value="1"/>
</dbReference>
<dbReference type="SUPFAM" id="SSF47060">
    <property type="entry name" value="S15/NS1 RNA-binding domain"/>
    <property type="match status" value="1"/>
</dbReference>
<dbReference type="PROSITE" id="PS00362">
    <property type="entry name" value="RIBOSOMAL_S15"/>
    <property type="match status" value="1"/>
</dbReference>
<name>RR15_PELHO</name>
<sequence>MVKTPLISVISQEEKEKNRGSVEFQVLCFTKKIDQISSHLKLHRKDYLSQRGLHKILGKRQRLLSYLSKKNRVRYKELINRLNIRESKTR</sequence>
<protein>
    <recommendedName>
        <fullName evidence="2">Small ribosomal subunit protein uS15c</fullName>
    </recommendedName>
    <alternativeName>
        <fullName>30S ribosomal protein S15, chloroplastic</fullName>
    </alternativeName>
</protein>
<organism>
    <name type="scientific">Pelargonium hortorum</name>
    <name type="common">Common geranium</name>
    <name type="synonym">Pelargonium inquinans x Pelargonium zonale</name>
    <dbReference type="NCBI Taxonomy" id="4031"/>
    <lineage>
        <taxon>Eukaryota</taxon>
        <taxon>Viridiplantae</taxon>
        <taxon>Streptophyta</taxon>
        <taxon>Embryophyta</taxon>
        <taxon>Tracheophyta</taxon>
        <taxon>Spermatophyta</taxon>
        <taxon>Magnoliopsida</taxon>
        <taxon>eudicotyledons</taxon>
        <taxon>Gunneridae</taxon>
        <taxon>Pentapetalae</taxon>
        <taxon>rosids</taxon>
        <taxon>malvids</taxon>
        <taxon>Geraniales</taxon>
        <taxon>Geraniaceae</taxon>
        <taxon>Pelargonium</taxon>
    </lineage>
</organism>
<feature type="chain" id="PRO_0000276976" description="Small ribosomal subunit protein uS15c">
    <location>
        <begin position="1"/>
        <end position="90"/>
    </location>
</feature>
<evidence type="ECO:0000250" key="1"/>
<evidence type="ECO:0000305" key="2"/>